<proteinExistence type="inferred from homology"/>
<reference key="1">
    <citation type="submission" date="2008-02" db="EMBL/GenBank/DDBJ databases">
        <title>Complete sequence of Shewanella woodyi ATCC 51908.</title>
        <authorList>
            <consortium name="US DOE Joint Genome Institute"/>
            <person name="Copeland A."/>
            <person name="Lucas S."/>
            <person name="Lapidus A."/>
            <person name="Glavina del Rio T."/>
            <person name="Dalin E."/>
            <person name="Tice H."/>
            <person name="Bruce D."/>
            <person name="Goodwin L."/>
            <person name="Pitluck S."/>
            <person name="Sims D."/>
            <person name="Brettin T."/>
            <person name="Detter J.C."/>
            <person name="Han C."/>
            <person name="Kuske C.R."/>
            <person name="Schmutz J."/>
            <person name="Larimer F."/>
            <person name="Land M."/>
            <person name="Hauser L."/>
            <person name="Kyrpides N."/>
            <person name="Lykidis A."/>
            <person name="Zhao J.-S."/>
            <person name="Richardson P."/>
        </authorList>
    </citation>
    <scope>NUCLEOTIDE SEQUENCE [LARGE SCALE GENOMIC DNA]</scope>
    <source>
        <strain>ATCC 51908 / MS32</strain>
    </source>
</reference>
<keyword id="KW-1185">Reference proteome</keyword>
<keyword id="KW-0687">Ribonucleoprotein</keyword>
<keyword id="KW-0689">Ribosomal protein</keyword>
<keyword id="KW-0694">RNA-binding</keyword>
<keyword id="KW-0699">rRNA-binding</keyword>
<evidence type="ECO:0000255" key="1">
    <source>
        <dbReference type="HAMAP-Rule" id="MF_01369"/>
    </source>
</evidence>
<evidence type="ECO:0000305" key="2"/>
<accession>B1KMY1</accession>
<organism>
    <name type="scientific">Shewanella woodyi (strain ATCC 51908 / MS32)</name>
    <dbReference type="NCBI Taxonomy" id="392500"/>
    <lineage>
        <taxon>Bacteria</taxon>
        <taxon>Pseudomonadati</taxon>
        <taxon>Pseudomonadota</taxon>
        <taxon>Gammaproteobacteria</taxon>
        <taxon>Alteromonadales</taxon>
        <taxon>Shewanellaceae</taxon>
        <taxon>Shewanella</taxon>
    </lineage>
</organism>
<gene>
    <name evidence="1" type="primary">rplW</name>
    <name type="ordered locus">Swoo_4688</name>
</gene>
<name>RL23_SHEWM</name>
<feature type="chain" id="PRO_1000144606" description="Large ribosomal subunit protein uL23">
    <location>
        <begin position="1"/>
        <end position="99"/>
    </location>
</feature>
<comment type="function">
    <text evidence="1">One of the early assembly proteins it binds 23S rRNA. One of the proteins that surrounds the polypeptide exit tunnel on the outside of the ribosome. Forms the main docking site for trigger factor binding to the ribosome.</text>
</comment>
<comment type="subunit">
    <text evidence="1">Part of the 50S ribosomal subunit. Contacts protein L29, and trigger factor when it is bound to the ribosome.</text>
</comment>
<comment type="similarity">
    <text evidence="1">Belongs to the universal ribosomal protein uL23 family.</text>
</comment>
<protein>
    <recommendedName>
        <fullName evidence="1">Large ribosomal subunit protein uL23</fullName>
    </recommendedName>
    <alternativeName>
        <fullName evidence="2">50S ribosomal protein L23</fullName>
    </alternativeName>
</protein>
<sequence length="99" mass="10846">MISQERLLKVILAPHISEKSTVCAENDNTVVFRVAIDATKAEIKAAVAQLFEVEVDSVRTLVNKGKTKRTGARMGRRVDWKKAYVTLAAGAEIDFVGAE</sequence>
<dbReference type="EMBL" id="CP000961">
    <property type="protein sequence ID" value="ACA88938.1"/>
    <property type="molecule type" value="Genomic_DNA"/>
</dbReference>
<dbReference type="RefSeq" id="WP_012327258.1">
    <property type="nucleotide sequence ID" value="NC_010506.1"/>
</dbReference>
<dbReference type="SMR" id="B1KMY1"/>
<dbReference type="STRING" id="392500.Swoo_4688"/>
<dbReference type="KEGG" id="swd:Swoo_4688"/>
<dbReference type="eggNOG" id="COG0089">
    <property type="taxonomic scope" value="Bacteria"/>
</dbReference>
<dbReference type="HOGENOM" id="CLU_037562_3_1_6"/>
<dbReference type="Proteomes" id="UP000002168">
    <property type="component" value="Chromosome"/>
</dbReference>
<dbReference type="GO" id="GO:1990904">
    <property type="term" value="C:ribonucleoprotein complex"/>
    <property type="evidence" value="ECO:0007669"/>
    <property type="project" value="UniProtKB-KW"/>
</dbReference>
<dbReference type="GO" id="GO:0005840">
    <property type="term" value="C:ribosome"/>
    <property type="evidence" value="ECO:0007669"/>
    <property type="project" value="UniProtKB-KW"/>
</dbReference>
<dbReference type="GO" id="GO:0019843">
    <property type="term" value="F:rRNA binding"/>
    <property type="evidence" value="ECO:0007669"/>
    <property type="project" value="UniProtKB-UniRule"/>
</dbReference>
<dbReference type="GO" id="GO:0003735">
    <property type="term" value="F:structural constituent of ribosome"/>
    <property type="evidence" value="ECO:0007669"/>
    <property type="project" value="InterPro"/>
</dbReference>
<dbReference type="GO" id="GO:0006412">
    <property type="term" value="P:translation"/>
    <property type="evidence" value="ECO:0007669"/>
    <property type="project" value="UniProtKB-UniRule"/>
</dbReference>
<dbReference type="FunFam" id="3.30.70.330:FF:000001">
    <property type="entry name" value="50S ribosomal protein L23"/>
    <property type="match status" value="1"/>
</dbReference>
<dbReference type="Gene3D" id="3.30.70.330">
    <property type="match status" value="1"/>
</dbReference>
<dbReference type="HAMAP" id="MF_01369_B">
    <property type="entry name" value="Ribosomal_uL23_B"/>
    <property type="match status" value="1"/>
</dbReference>
<dbReference type="InterPro" id="IPR012677">
    <property type="entry name" value="Nucleotide-bd_a/b_plait_sf"/>
</dbReference>
<dbReference type="InterPro" id="IPR013025">
    <property type="entry name" value="Ribosomal_uL23-like"/>
</dbReference>
<dbReference type="InterPro" id="IPR012678">
    <property type="entry name" value="Ribosomal_uL23/eL15/eS24_sf"/>
</dbReference>
<dbReference type="InterPro" id="IPR001014">
    <property type="entry name" value="Ribosomal_uL23_CS"/>
</dbReference>
<dbReference type="NCBIfam" id="NF004358">
    <property type="entry name" value="PRK05738.1-1"/>
    <property type="match status" value="1"/>
</dbReference>
<dbReference type="NCBIfam" id="NF004359">
    <property type="entry name" value="PRK05738.1-3"/>
    <property type="match status" value="1"/>
</dbReference>
<dbReference type="NCBIfam" id="NF004363">
    <property type="entry name" value="PRK05738.2-4"/>
    <property type="match status" value="1"/>
</dbReference>
<dbReference type="PANTHER" id="PTHR11620">
    <property type="entry name" value="60S RIBOSOMAL PROTEIN L23A"/>
    <property type="match status" value="1"/>
</dbReference>
<dbReference type="Pfam" id="PF00276">
    <property type="entry name" value="Ribosomal_L23"/>
    <property type="match status" value="1"/>
</dbReference>
<dbReference type="SUPFAM" id="SSF54189">
    <property type="entry name" value="Ribosomal proteins S24e, L23 and L15e"/>
    <property type="match status" value="1"/>
</dbReference>
<dbReference type="PROSITE" id="PS00050">
    <property type="entry name" value="RIBOSOMAL_L23"/>
    <property type="match status" value="1"/>
</dbReference>